<organismHost>
    <name type="scientific">Homo sapiens</name>
    <name type="common">Human</name>
    <dbReference type="NCBI Taxonomy" id="9606"/>
</organismHost>
<comment type="function">
    <molecule>Envelope glycoprotein gp160</molecule>
    <text evidence="1">Oligomerizes in the host endoplasmic reticulum into predominantly trimers. In a second time, gp160 transits in the host Golgi, where glycosylation is completed. The precursor is then proteolytically cleaved in the trans-Golgi and thereby activated by cellular furin or furin-like proteases to produce gp120 and gp41.</text>
</comment>
<comment type="function">
    <molecule>Surface protein gp120</molecule>
    <text evidence="1">Attaches the virus to the host lymphoid cell by binding to the primary receptor CD4. This interaction induces a structural rearrangement creating a high affinity binding site for a chemokine coreceptor like CXCR4 and/or CCR5. Acts as a ligand for CD209/DC-SIGN and CLEC4M/DC-SIGNR, which are respectively found on dendritic cells (DCs), and on endothelial cells of liver sinusoids and lymph node sinuses. These interactions allow capture of viral particles at mucosal surfaces by these cells and subsequent transmission to permissive cells. HIV subverts the migration properties of dendritic cells to gain access to CD4+ T-cells in lymph nodes. Virus transmission to permissive T-cells occurs either in trans (without DCs infection, through viral capture and transmission), or in cis (following DCs productive infection, through the usual CD4-gp120 interaction), thereby inducing a robust infection. In trans infection, bound virions remain infectious over days and it is proposed that they are not degraded, but protected in non-lysosomal acidic organelles within the DCs close to the cell membrane thus contributing to the viral infectious potential during DCs' migration from the periphery to the lymphoid tissues. On arrival at lymphoid tissues, intact virions recycle back to DCs' cell surface allowing virus transmission to CD4+ T-cells.</text>
</comment>
<comment type="function">
    <molecule>Transmembrane protein gp41</molecule>
    <text evidence="1">Acts as a class I viral fusion protein. Under the current model, the protein has at least 3 conformational states: pre-fusion native state, pre-hairpin intermediate state, and post-fusion hairpin state. During fusion of viral and target intracellular membranes, the coiled coil regions (heptad repeats) assume a trimer-of-hairpins structure, positioning the fusion peptide in close proximity to the C-terminal region of the ectodomain. The formation of this structure appears to drive apposition and subsequent fusion of viral and target cell membranes. Complete fusion occurs in host cell endosomes and is dynamin-dependent, however some lipid transfer might occur at the plasma membrane. The virus undergoes clathrin-dependent internalization long before endosomal fusion, thus minimizing the surface exposure of conserved viral epitopes during fusion and reducing the efficacy of inhibitors targeting these epitopes. Membranes fusion leads to delivery of the nucleocapsid into the cytoplasm.</text>
</comment>
<comment type="subunit">
    <molecule>Surface protein gp120</molecule>
    <text evidence="1">The mature envelope protein (Env) consists of a homotrimer of non-covalently associated gp120-gp41 heterodimers. The resulting complex protrudes from the virus surface as a spike. There seems to be as few as 10 spikes on the average virion. Interacts with host CD4, CCR5 and CXCR4. Gp120 also interacts with the C-type lectins CD209/DC-SIGN and CLEC4M/DC-SIGNR (collectively referred to as DC-SIGN(R)). Gp120 and gp41 interact with GalCer. Gp120 interacts with host ITGA4/ITGB7 complex; on CD4+ T-cells, this interaction results in rapid activation of integrin ITGAL/LFA-1, which facilitates efficient cell-to-cell spreading of HIV-1. Gp120 interacts with cell-associated heparan sulfate; this interaction increases virus infectivity on permissive cells and may be involved in infection of CD4- cells.</text>
</comment>
<comment type="subunit">
    <molecule>Transmembrane protein gp41</molecule>
    <text evidence="1">The mature envelope protein (Env) consists of a homotrimer of non-covalently associated gp120-gp41 heterodimers. The resulting complex protrudes from the virus surface as a spike. There seems to be as few as 10 spikes on the average virion.</text>
</comment>
<comment type="subcellular location">
    <molecule>Surface protein gp120</molecule>
    <subcellularLocation>
        <location evidence="1">Virion membrane</location>
        <topology evidence="1">Peripheral membrane protein</topology>
    </subcellularLocation>
    <subcellularLocation>
        <location evidence="1">Host cell membrane</location>
        <topology evidence="1">Peripheral membrane protein</topology>
    </subcellularLocation>
    <subcellularLocation>
        <location evidence="1">Host endosome membrane</location>
        <topology evidence="1">Single-pass type I membrane protein</topology>
    </subcellularLocation>
    <text evidence="1">The surface protein is not anchored to the viral envelope, but associates with the extravirion surface through its binding to TM. It is probably concentrated at the site of budding and incorporated into the virions possibly by contacts between the cytoplasmic tail of Env and the N-terminus of Gag.</text>
</comment>
<comment type="subcellular location">
    <molecule>Transmembrane protein gp41</molecule>
    <subcellularLocation>
        <location evidence="1">Virion membrane</location>
        <topology evidence="1">Single-pass type I membrane protein</topology>
    </subcellularLocation>
    <subcellularLocation>
        <location evidence="1">Host cell membrane</location>
        <topology evidence="1">Single-pass type I membrane protein</topology>
    </subcellularLocation>
    <subcellularLocation>
        <location evidence="1">Host endosome membrane</location>
        <topology evidence="1">Single-pass type I membrane protein</topology>
    </subcellularLocation>
    <text evidence="1">It is probably concentrated at the site of budding and incorporated into the virions possibly by contacts between the cytoplasmic tail of Env and the N-terminus of Gag.</text>
</comment>
<comment type="domain">
    <text evidence="1">Some of the most genetically diverse regions of the viral genome are present in Env. They are called variable regions 1 through 5 (V1 through V5). Coreceptor usage of gp120 is determined mainly by the primary structure of the third variable region (V3) in the outer domain of gp120. The sequence of V3 determines which coreceptor, CCR5 and/or CXCR4 (corresponding to R5/macrophage, X4/T cell and R5X4/T cell and macrophage tropism), is used to trigger the fusion potential of the Env complex, and hence which cells the virus can infect. Binding to CCR5 involves a region adjacent in addition to V3.</text>
</comment>
<comment type="domain">
    <text evidence="1">The membrane proximal external region (MPER) present in gp41 is a tryptophan-rich region recognized by the antibodies 2F5, Z13, and 4E10. MPER seems to play a role in fusion.</text>
</comment>
<comment type="domain">
    <text evidence="1">The 17 amino acids long immunosuppressive region is present in many retroviral envelope proteins. Synthetic peptides derived from this relatively conserved sequence inhibit immune function in vitro and in vivo.</text>
</comment>
<comment type="domain">
    <text evidence="1">The YXXL motif is involved in determining the exact site of viral release at the surface of infected mononuclear cells and promotes endocytosis. YXXL and di-leucine endocytosis motifs interact directly or indirectly with the clathrin adapter complexes, opperate independently, and their activities are not additive.</text>
</comment>
<comment type="domain">
    <text evidence="1">The CD4-binding region is targeted by the antibody b12.</text>
</comment>
<comment type="PTM">
    <text evidence="1">Highly glycosylated by host. The high number of glycan on the protein is reffered to as 'glycan shield' because it contributes to hide protein sequence from adaptive immune system.</text>
</comment>
<comment type="PTM">
    <text evidence="1">Palmitoylation of the transmembrane protein and of Env polyprotein (prior to its proteolytic cleavage) is essential for their association with host cell membrane lipid rafts. Palmitoylation is therefore required for envelope trafficking to classical lipid rafts, but not for viral replication.</text>
</comment>
<comment type="PTM">
    <text evidence="1">Specific enzymatic cleavages in vivo yield mature proteins. Envelope glycoproteins are synthesized as an inactive precursor that is heavily N-glycosylated and processed likely by host cell furin in the Golgi to yield the mature SU and TM proteins. The cleavage site between SU and TM requires the minimal sequence [KR]-X-[KR]-R. About 2 of the 9 disulfide bonds of gp41 are reduced by P4HB/PDI, following binding to CD4 receptor.</text>
</comment>
<comment type="miscellaneous">
    <text evidence="1">Inhibitors targeting HIV-1 viral envelope proteins are used as antiretroviral drugs. Attachment of virions to the cell surface via non-specific interactions and CD4 binding can be blocked by inhibitors that include cyanovirin-N, cyclotriazadisulfonamide analogs, PRO 2000, TNX 355 and PRO 542. In addition, BMS 806 can block CD4-induced conformational changes. Env interactions with the coreceptor molecules can be targeted by CCR5 antagonists including SCH-D, maraviroc (UK 427857) and aplaviroc (GW 873140), and the CXCR4 antagonist AMD 070. Fusion of viral and cellular membranes can be inhibited by peptides such as enfuvirtide and tifuvirtide (T 1249). Resistance to inhibitors associated with mutations in Env are observed. Most of the time, single mutations confer only a modest reduction in drug susceptibility. Combination of several mutations is usually required to develop a high-level drug resistance.</text>
</comment>
<comment type="miscellaneous">
    <text evidence="1">HIV-1 lineages are divided in three main groups, M (for Major), O (for Outlier), and N (for New, or Non-M, Non-O). The vast majority of strains found worldwide belong to the group M. Group O seems to be endemic to and largely confined to Cameroon and neighboring countries in West Central Africa, where these viruses represent a small minority of HIV-1 strains. The group N is represented by a limited number of isolates from Cameroonian persons. The group M is further subdivided in 9 clades or subtypes (A to D, F to H, J and K).</text>
</comment>
<comment type="similarity">
    <text evidence="1">Belongs to the HIV-1 env protein family.</text>
</comment>
<comment type="online information" name="hivdb">
    <link uri="https://hivdb.stanford.edu"/>
    <text>HIV drug resistance database</text>
</comment>
<comment type="online information" name="HIV drug resistance mutations">
    <link uri="https://www.iasusa.org/hiv-drug-resistance/hiv-drug-resistance-mutations/"/>
</comment>
<feature type="signal peptide" evidence="1">
    <location>
        <begin position="1"/>
        <end position="31"/>
    </location>
</feature>
<feature type="chain" id="PRO_0000239473" description="Envelope glycoprotein gp160" evidence="1">
    <location>
        <begin position="32"/>
        <end position="855"/>
    </location>
</feature>
<feature type="chain" id="PRO_0000038386" description="Surface protein gp120" evidence="1">
    <location>
        <begin position="32"/>
        <end position="509"/>
    </location>
</feature>
<feature type="chain" id="PRO_0000038387" description="Transmembrane protein gp41" evidence="1">
    <location>
        <begin position="510"/>
        <end position="855"/>
    </location>
</feature>
<feature type="topological domain" description="Extracellular" evidence="1">
    <location>
        <begin position="32"/>
        <end position="683"/>
    </location>
</feature>
<feature type="transmembrane region" description="Helical" evidence="1">
    <location>
        <begin position="684"/>
        <end position="704"/>
    </location>
</feature>
<feature type="topological domain" description="Cytoplasmic" evidence="1">
    <location>
        <begin position="705"/>
        <end position="855"/>
    </location>
</feature>
<feature type="region of interest" description="V1" evidence="1">
    <location>
        <begin position="130"/>
        <end position="154"/>
    </location>
</feature>
<feature type="region of interest" description="V2" evidence="1">
    <location>
        <begin position="155"/>
        <end position="199"/>
    </location>
</feature>
<feature type="region of interest" description="V3" evidence="1">
    <location>
        <begin position="299"/>
        <end position="332"/>
    </location>
</feature>
<feature type="region of interest" description="CD4-binding loop" evidence="1">
    <location>
        <begin position="366"/>
        <end position="376"/>
    </location>
</feature>
<feature type="region of interest" description="V4" evidence="1">
    <location>
        <begin position="387"/>
        <end position="415"/>
    </location>
</feature>
<feature type="region of interest" description="V5">
    <location>
        <begin position="458"/>
        <end position="469"/>
    </location>
</feature>
<feature type="region of interest" description="V5" evidence="1">
    <location>
        <begin position="460"/>
        <end position="469"/>
    </location>
</feature>
<feature type="region of interest" description="Fusion peptide" evidence="1">
    <location>
        <begin position="510"/>
        <end position="531"/>
    </location>
</feature>
<feature type="region of interest" description="Immunosuppression" evidence="1">
    <location>
        <begin position="573"/>
        <end position="591"/>
    </location>
</feature>
<feature type="region of interest" description="MPER; binding to GalCer" evidence="1">
    <location>
        <begin position="661"/>
        <end position="682"/>
    </location>
</feature>
<feature type="region of interest" description="Disordered" evidence="2">
    <location>
        <begin position="720"/>
        <end position="739"/>
    </location>
</feature>
<feature type="coiled-coil region" evidence="1">
    <location>
        <begin position="632"/>
        <end position="666"/>
    </location>
</feature>
<feature type="short sequence motif" description="YXXL motif; contains endocytosis signal" evidence="1">
    <location>
        <begin position="711"/>
        <end position="714"/>
    </location>
</feature>
<feature type="short sequence motif" description="Di-leucine internalization motif" evidence="1">
    <location>
        <begin position="854"/>
        <end position="855"/>
    </location>
</feature>
<feature type="site" description="Cleavage; by host furin" evidence="1">
    <location>
        <begin position="509"/>
        <end position="510"/>
    </location>
</feature>
<feature type="lipid moiety-binding region" description="S-palmitoyl cysteine; by host" evidence="1">
    <location>
        <position position="763"/>
    </location>
</feature>
<feature type="glycosylation site" description="N-linked (GlcNAc...) asparagine; by host" evidence="1">
    <location>
        <position position="87"/>
    </location>
</feature>
<feature type="glycosylation site" description="N-linked (GlcNAc...) asparagine; by host" evidence="1">
    <location>
        <position position="129"/>
    </location>
</feature>
<feature type="glycosylation site" description="N-linked (GlcNAc...) asparagine; by host" evidence="1">
    <location>
        <position position="140"/>
    </location>
</feature>
<feature type="glycosylation site" description="N-linked (GlcNAc...) asparagine; by host" evidence="1">
    <location>
        <position position="154"/>
    </location>
</feature>
<feature type="glycosylation site" description="N-linked (GlcNAc...) asparagine; by host" evidence="1">
    <location>
        <position position="158"/>
    </location>
</feature>
<feature type="glycosylation site" description="N-linked (GlcNAc...) asparagine; by host" evidence="1">
    <location>
        <position position="184"/>
    </location>
</feature>
<feature type="glycosylation site" description="N-linked (GlcNAc...) asparagine; by host" evidence="1">
    <location>
        <position position="190"/>
    </location>
</feature>
<feature type="glycosylation site" description="N-linked (GlcNAc...) asparagine; by host" evidence="1">
    <location>
        <position position="200"/>
    </location>
</feature>
<feature type="glycosylation site" description="N-linked (GlcNAc...) asparagine; by host" evidence="1">
    <location>
        <position position="233"/>
    </location>
</feature>
<feature type="glycosylation site" description="N-linked (GlcNAc...) asparagine; by host" evidence="1">
    <location>
        <position position="244"/>
    </location>
</feature>
<feature type="glycosylation site" description="N-linked (GlcNAc...) asparagine; by host" evidence="1">
    <location>
        <position position="265"/>
    </location>
</feature>
<feature type="glycosylation site" description="N-linked (GlcNAc...) asparagine; by host" evidence="1">
    <location>
        <position position="279"/>
    </location>
</feature>
<feature type="glycosylation site" description="N-linked (GlcNAc...) asparagine; by host" evidence="1">
    <location>
        <position position="292"/>
    </location>
</feature>
<feature type="glycosylation site" description="N-linked (GlcNAc...) asparagine; by host" evidence="1">
    <location>
        <position position="298"/>
    </location>
</feature>
<feature type="glycosylation site" description="N-linked (GlcNAc...) asparagine; by host" evidence="1">
    <location>
        <position position="304"/>
    </location>
</feature>
<feature type="glycosylation site" description="N-linked (GlcNAc...) asparagine; by host" evidence="1">
    <location>
        <position position="334"/>
    </location>
</feature>
<feature type="glycosylation site" description="N-linked (GlcNAc...) asparagine; by host" evidence="1">
    <location>
        <position position="341"/>
    </location>
</feature>
<feature type="glycosylation site" description="N-linked (GlcNAc...) asparagine; by host" evidence="1">
    <location>
        <position position="358"/>
    </location>
</feature>
<feature type="glycosylation site" description="N-linked (GlcNAc...) asparagine; by host" evidence="1">
    <location>
        <position position="364"/>
    </location>
</feature>
<feature type="glycosylation site" description="N-linked (GlcNAc...) asparagine; by host" evidence="1">
    <location>
        <position position="388"/>
    </location>
</feature>
<feature type="glycosylation site" description="N-linked (GlcNAc...) asparagine; by host" evidence="1">
    <location>
        <position position="394"/>
    </location>
</feature>
<feature type="glycosylation site" description="N-linked (GlcNAc...) asparagine; by host" evidence="1">
    <location>
        <position position="400"/>
    </location>
</feature>
<feature type="glycosylation site" description="N-linked (GlcNAc...) asparagine; by host" evidence="1">
    <location>
        <position position="408"/>
    </location>
</feature>
<feature type="glycosylation site" description="N-linked (GlcNAc...) asparagine; by host" evidence="1">
    <location>
        <position position="445"/>
    </location>
</feature>
<feature type="glycosylation site" description="N-linked (GlcNAc...) asparagine; by host" evidence="1">
    <location>
        <position position="458"/>
    </location>
</feature>
<feature type="glycosylation site" description="N-linked (GlcNAc...) asparagine; by host" evidence="1">
    <location>
        <position position="461"/>
    </location>
</feature>
<feature type="glycosylation site" description="N-linked (GlcNAc...) asparagine; by host" evidence="1">
    <location>
        <position position="610"/>
    </location>
</feature>
<feature type="glycosylation site" description="N-linked (GlcNAc...) asparagine; by host" evidence="1">
    <location>
        <position position="615"/>
    </location>
</feature>
<feature type="glycosylation site" description="N-linked (GlcNAc...) asparagine; by host" evidence="1">
    <location>
        <position position="624"/>
    </location>
</feature>
<feature type="glycosylation site" description="N-linked (GlcNAc...) asparagine; by host" evidence="1">
    <location>
        <position position="636"/>
    </location>
</feature>
<feature type="disulfide bond" evidence="1">
    <location>
        <begin position="53"/>
        <end position="73"/>
    </location>
</feature>
<feature type="disulfide bond" evidence="1">
    <location>
        <begin position="118"/>
        <end position="208"/>
    </location>
</feature>
<feature type="disulfide bond" evidence="1">
    <location>
        <begin position="125"/>
        <end position="199"/>
    </location>
</feature>
<feature type="disulfide bond" evidence="1">
    <location>
        <begin position="130"/>
        <end position="155"/>
    </location>
</feature>
<feature type="disulfide bond" evidence="1">
    <location>
        <begin position="221"/>
        <end position="250"/>
    </location>
</feature>
<feature type="disulfide bond" evidence="1">
    <location>
        <begin position="231"/>
        <end position="242"/>
    </location>
</feature>
<feature type="disulfide bond" evidence="1">
    <location>
        <begin position="299"/>
        <end position="333"/>
    </location>
</feature>
<feature type="disulfide bond" evidence="1">
    <location>
        <begin position="380"/>
        <end position="442"/>
    </location>
</feature>
<feature type="disulfide bond" evidence="1">
    <location>
        <begin position="387"/>
        <end position="415"/>
    </location>
</feature>
<feature type="disulfide bond" evidence="1">
    <location>
        <begin position="597"/>
        <end position="603"/>
    </location>
</feature>
<feature type="strand" evidence="3">
    <location>
        <begin position="595"/>
        <end position="600"/>
    </location>
</feature>
<feature type="turn" evidence="3">
    <location>
        <begin position="601"/>
        <end position="605"/>
    </location>
</feature>
<proteinExistence type="evidence at protein level"/>
<sequence length="855" mass="97438">MKVKGTRRNYQHLWRWGTLLLGMLMICSATEKLWVTVYYGVPVWKEATTTLFCASDARAYDTEVHNVWATHACVPTDPNPQEVVLGNVTENFNMWKNNMVEQMQEDIISLWDQSLKPCVKLTPLCVTLNCTDLGKATNTNSSNWKEEIKGEIKNCSFNITTSIRDKIQKENALFRNLDVVPIDNASTTTNYTNYRLIHCNRSVITQACPKVSFEPIPIHYCTPAGFAILKCNNKTFNGKGPCTNVSTVQCTHGIRPIVSTQLLLNGSLAEEEVVIRSDNFTNNAKTIIVQLNESVAINCTRPNNNTRKSIYIGPGRAFHTTGRIIGDIRKAHCNISRAQWNNTLEQIVKKLREQFGNNKTIVFNQSSGGDPEIVMHSFNCRGEFFYCNTTQLFNNTWRLNHTEGTKGNDTIILPCRIKQIINMWQEVGKAMYAPPIGGQISCSSNITGLLLTRDGGTNVTNDTEVFRPGGGDMRDNWRSELYKYKVIKIEPLGIAPTKAKRRVVQREKRAVGIVGAMFLGFLGAAGSTMGAVSLTLTVQARQLLSGIVQQQNNLLRAIEAQQHLLQLTVWGIKQLQARVLAVERYLRDQQLLGIWGCSGKLICTTAVPWNASWSNKSLEDIWDNMTWMQWEREIDNYTNTIYTLLEESQNQQEKNEQELLELDKWASLWNWFSITNWLWYIKIFIMIVGGLVGLRIVFAVLSIVNRVRQGYSPLSFQTRLPVPRGPDRPDGIEEEGGERDRDRSVRLVDGFLALIWEDLRSLCLFSYRRLRDLLLIAARTVEILGHRGWEALKYWWSLLQYWIQELKNSAVSWLNATAIAVTEGTDRVIEVAQRAYRAILHIHRRIRQGLERLLL</sequence>
<accession>P03378</accession>
<organism>
    <name type="scientific">Human immunodeficiency virus type 1 group M subtype B (isolate ARV2/SF2)</name>
    <name type="common">HIV-1</name>
    <dbReference type="NCBI Taxonomy" id="11685"/>
    <lineage>
        <taxon>Viruses</taxon>
        <taxon>Riboviria</taxon>
        <taxon>Pararnavirae</taxon>
        <taxon>Artverviricota</taxon>
        <taxon>Revtraviricetes</taxon>
        <taxon>Ortervirales</taxon>
        <taxon>Retroviridae</taxon>
        <taxon>Orthoretrovirinae</taxon>
        <taxon>Lentivirus</taxon>
        <taxon>Human immunodeficiency virus type 1</taxon>
    </lineage>
</organism>
<protein>
    <recommendedName>
        <fullName evidence="1">Envelope glycoprotein gp160</fullName>
    </recommendedName>
    <alternativeName>
        <fullName evidence="1">Env polyprotein</fullName>
    </alternativeName>
    <component>
        <recommendedName>
            <fullName evidence="1">Surface protein gp120</fullName>
            <shortName evidence="1">SU</shortName>
        </recommendedName>
        <alternativeName>
            <fullName evidence="1">Glycoprotein 120</fullName>
            <shortName evidence="1">gp120</shortName>
        </alternativeName>
    </component>
    <component>
        <recommendedName>
            <fullName evidence="1">Transmembrane protein gp41</fullName>
            <shortName evidence="1">TM</shortName>
        </recommendedName>
        <alternativeName>
            <fullName evidence="1">Glycoprotein 41</fullName>
            <shortName evidence="1">gp41</shortName>
        </alternativeName>
    </component>
</protein>
<dbReference type="EMBL" id="K02007">
    <property type="protein sequence ID" value="AAB59882.1"/>
    <property type="molecule type" value="Genomic_RNA"/>
</dbReference>
<dbReference type="PIR" id="A03976">
    <property type="entry name" value="VCLJA2"/>
</dbReference>
<dbReference type="PDB" id="5DRZ">
    <property type="method" value="X-ray"/>
    <property type="resolution" value="2.54 A"/>
    <property type="chains" value="P/Q=582-617"/>
</dbReference>
<dbReference type="PDBsum" id="5DRZ"/>
<dbReference type="SMR" id="P03378"/>
<dbReference type="GlyCosmos" id="P03378">
    <property type="glycosylation" value="30 sites, No reported glycans"/>
</dbReference>
<dbReference type="iPTMnet" id="P03378"/>
<dbReference type="ABCD" id="P03378">
    <property type="antibodies" value="1 sequenced antibody"/>
</dbReference>
<dbReference type="Reactome" id="R-HSA-5621480">
    <property type="pathway name" value="Dectin-2 family"/>
</dbReference>
<dbReference type="PRO" id="PR:P03378"/>
<dbReference type="Proteomes" id="UP000007688">
    <property type="component" value="Genome"/>
</dbReference>
<dbReference type="GO" id="GO:0044175">
    <property type="term" value="C:host cell endosome membrane"/>
    <property type="evidence" value="ECO:0007669"/>
    <property type="project" value="UniProtKB-SubCell"/>
</dbReference>
<dbReference type="GO" id="GO:0020002">
    <property type="term" value="C:host cell plasma membrane"/>
    <property type="evidence" value="ECO:0007669"/>
    <property type="project" value="UniProtKB-SubCell"/>
</dbReference>
<dbReference type="GO" id="GO:0016020">
    <property type="term" value="C:membrane"/>
    <property type="evidence" value="ECO:0007669"/>
    <property type="project" value="UniProtKB-UniRule"/>
</dbReference>
<dbReference type="GO" id="GO:0019031">
    <property type="term" value="C:viral envelope"/>
    <property type="evidence" value="ECO:0007669"/>
    <property type="project" value="UniProtKB-KW"/>
</dbReference>
<dbReference type="GO" id="GO:0055036">
    <property type="term" value="C:virion membrane"/>
    <property type="evidence" value="ECO:0007669"/>
    <property type="project" value="UniProtKB-SubCell"/>
</dbReference>
<dbReference type="GO" id="GO:0005198">
    <property type="term" value="F:structural molecule activity"/>
    <property type="evidence" value="ECO:0007669"/>
    <property type="project" value="UniProtKB-UniRule"/>
</dbReference>
<dbReference type="GO" id="GO:0075512">
    <property type="term" value="P:clathrin-dependent endocytosis of virus by host cell"/>
    <property type="evidence" value="ECO:0007669"/>
    <property type="project" value="UniProtKB-UniRule"/>
</dbReference>
<dbReference type="GO" id="GO:0039654">
    <property type="term" value="P:fusion of virus membrane with host endosome membrane"/>
    <property type="evidence" value="ECO:0007669"/>
    <property type="project" value="UniProtKB-UniRule"/>
</dbReference>
<dbReference type="GO" id="GO:0019064">
    <property type="term" value="P:fusion of virus membrane with host plasma membrane"/>
    <property type="evidence" value="ECO:0007669"/>
    <property type="project" value="UniProtKB-UniRule"/>
</dbReference>
<dbReference type="GO" id="GO:1903908">
    <property type="term" value="P:positive regulation of plasma membrane raft polarization"/>
    <property type="evidence" value="ECO:0007669"/>
    <property type="project" value="UniProtKB-UniRule"/>
</dbReference>
<dbReference type="GO" id="GO:1903911">
    <property type="term" value="P:positive regulation of receptor clustering"/>
    <property type="evidence" value="ECO:0007669"/>
    <property type="project" value="UniProtKB-UniRule"/>
</dbReference>
<dbReference type="GO" id="GO:0019082">
    <property type="term" value="P:viral protein processing"/>
    <property type="evidence" value="ECO:0007669"/>
    <property type="project" value="UniProtKB-UniRule"/>
</dbReference>
<dbReference type="GO" id="GO:0019062">
    <property type="term" value="P:virion attachment to host cell"/>
    <property type="evidence" value="ECO:0007669"/>
    <property type="project" value="UniProtKB-UniRule"/>
</dbReference>
<dbReference type="CDD" id="cd09909">
    <property type="entry name" value="HIV-1-like_HR1-HR2"/>
    <property type="match status" value="1"/>
</dbReference>
<dbReference type="FunFam" id="1.10.287.210:FF:000001">
    <property type="entry name" value="Envelope glycoprotein gp160"/>
    <property type="match status" value="1"/>
</dbReference>
<dbReference type="FunFam" id="1.20.5.490:FF:000001">
    <property type="entry name" value="Envelope glycoprotein gp160"/>
    <property type="match status" value="1"/>
</dbReference>
<dbReference type="FunFam" id="2.170.40.20:FF:000001">
    <property type="entry name" value="Envelope glycoprotein gp160"/>
    <property type="match status" value="1"/>
</dbReference>
<dbReference type="FunFam" id="2.170.40.20:FF:000003">
    <property type="entry name" value="Envelope glycoprotein gp160"/>
    <property type="match status" value="1"/>
</dbReference>
<dbReference type="Gene3D" id="1.10.287.210">
    <property type="match status" value="1"/>
</dbReference>
<dbReference type="Gene3D" id="2.170.40.20">
    <property type="entry name" value="Human immunodeficiency virus 1, Gp160, envelope glycoprotein"/>
    <property type="match status" value="2"/>
</dbReference>
<dbReference type="Gene3D" id="1.20.5.490">
    <property type="entry name" value="Single helix bin"/>
    <property type="match status" value="1"/>
</dbReference>
<dbReference type="HAMAP" id="MF_04083">
    <property type="entry name" value="HIV_ENV"/>
    <property type="match status" value="1"/>
</dbReference>
<dbReference type="InterPro" id="IPR036377">
    <property type="entry name" value="Gp120_core_sf"/>
</dbReference>
<dbReference type="InterPro" id="IPR037527">
    <property type="entry name" value="Gp160"/>
</dbReference>
<dbReference type="InterPro" id="IPR000328">
    <property type="entry name" value="GP41-like"/>
</dbReference>
<dbReference type="InterPro" id="IPR000777">
    <property type="entry name" value="HIV1_Gp120"/>
</dbReference>
<dbReference type="Pfam" id="PF00516">
    <property type="entry name" value="GP120"/>
    <property type="match status" value="1"/>
</dbReference>
<dbReference type="Pfam" id="PF00517">
    <property type="entry name" value="GP41"/>
    <property type="match status" value="1"/>
</dbReference>
<dbReference type="SUPFAM" id="SSF56502">
    <property type="entry name" value="gp120 core"/>
    <property type="match status" value="2"/>
</dbReference>
<dbReference type="SUPFAM" id="SSF58069">
    <property type="entry name" value="Virus ectodomain"/>
    <property type="match status" value="1"/>
</dbReference>
<name>ENV_HV1A2</name>
<keyword id="KW-0002">3D-structure</keyword>
<keyword id="KW-0014">AIDS</keyword>
<keyword id="KW-0053">Apoptosis</keyword>
<keyword id="KW-1165">Clathrin-mediated endocytosis of virus by host</keyword>
<keyword id="KW-0165">Cleavage on pair of basic residues</keyword>
<keyword id="KW-0175">Coiled coil</keyword>
<keyword id="KW-1015">Disulfide bond</keyword>
<keyword id="KW-1170">Fusion of virus membrane with host endosomal membrane</keyword>
<keyword id="KW-1168">Fusion of virus membrane with host membrane</keyword>
<keyword id="KW-0325">Glycoprotein</keyword>
<keyword id="KW-1032">Host cell membrane</keyword>
<keyword id="KW-1039">Host endosome</keyword>
<keyword id="KW-1043">Host membrane</keyword>
<keyword id="KW-0945">Host-virus interaction</keyword>
<keyword id="KW-0449">Lipoprotein</keyword>
<keyword id="KW-0472">Membrane</keyword>
<keyword id="KW-0564">Palmitate</keyword>
<keyword id="KW-1185">Reference proteome</keyword>
<keyword id="KW-0732">Signal</keyword>
<keyword id="KW-0812">Transmembrane</keyword>
<keyword id="KW-1133">Transmembrane helix</keyword>
<keyword id="KW-1161">Viral attachment to host cell</keyword>
<keyword id="KW-0261">Viral envelope protein</keyword>
<keyword id="KW-0899">Viral immunoevasion</keyword>
<keyword id="KW-1162">Viral penetration into host cytoplasm</keyword>
<keyword id="KW-0946">Virion</keyword>
<keyword id="KW-1164">Virus endocytosis by host</keyword>
<keyword id="KW-1160">Virus entry into host cell</keyword>
<evidence type="ECO:0000255" key="1">
    <source>
        <dbReference type="HAMAP-Rule" id="MF_04083"/>
    </source>
</evidence>
<evidence type="ECO:0000256" key="2">
    <source>
        <dbReference type="SAM" id="MobiDB-lite"/>
    </source>
</evidence>
<evidence type="ECO:0007829" key="3">
    <source>
        <dbReference type="PDB" id="5DRZ"/>
    </source>
</evidence>
<reference key="1">
    <citation type="journal article" date="1985" name="Science">
        <title>Nucleotide sequence and expression of an AIDS-associated retrovirus (ARV-2).</title>
        <authorList>
            <person name="Sanchez-Pescador R."/>
            <person name="Power M.D."/>
            <person name="Barr P.J."/>
            <person name="Steimer K.S."/>
            <person name="Stempien M.M."/>
            <person name="Brown-Shimer S.L."/>
            <person name="Gee W.W."/>
            <person name="Renard A."/>
            <person name="Randolph A."/>
            <person name="Levy J.A."/>
            <person name="Dina D."/>
            <person name="Luciw P.A."/>
        </authorList>
    </citation>
    <scope>NUCLEOTIDE SEQUENCE [GENOMIC RNA]</scope>
</reference>
<reference key="2">
    <citation type="journal article" date="2003" name="APMIS">
        <title>Pathogens target DC-SIGN to influence their fate DC-SIGN functions as a pathogen receptor with broad specificity.</title>
        <authorList>
            <person name="Geijtenbeek T.B."/>
            <person name="van Kooyk Y."/>
        </authorList>
    </citation>
    <scope>REVIEW</scope>
</reference>
<reference key="3">
    <citation type="journal article" date="2003" name="Biochim. Biophys. Acta">
        <title>The HIV Env-mediated fusion reaction.</title>
        <authorList>
            <person name="Gallo S.A."/>
            <person name="Finnegan C.M."/>
            <person name="Viard M."/>
            <person name="Raviv Y."/>
            <person name="Dimitrov A."/>
            <person name="Rawat S.S."/>
            <person name="Puri A."/>
            <person name="Durell S."/>
            <person name="Blumenthal R."/>
        </authorList>
    </citation>
    <scope>REVIEW</scope>
</reference>
<reference key="4">
    <citation type="journal article" date="2005" name="Cell Death Differ.">
        <title>Mechanisms of apoptosis induction by the HIV-1 envelope.</title>
        <authorList>
            <person name="Perfettini J.-L."/>
            <person name="Castedo M."/>
            <person name="Roumier T."/>
            <person name="Andreau K."/>
            <person name="Nardacci R."/>
            <person name="Piacentini M."/>
            <person name="Kroemer G."/>
        </authorList>
    </citation>
    <scope>REVIEW</scope>
</reference>
<reference key="5">
    <citation type="journal article" date="2005" name="AIDS Res. Hum. Retroviruses">
        <title>V3: HIV's switch-hitter.</title>
        <authorList>
            <person name="Hartley O."/>
            <person name="Klasse P.J."/>
            <person name="Sattentau Q.J."/>
            <person name="Moore J.P."/>
        </authorList>
    </citation>
    <scope>REVIEW</scope>
</reference>
<reference key="6">
    <citation type="journal article" date="2005" name="Drugs">
        <title>Emerging drug targets for antiretroviral therapy.</title>
        <authorList>
            <person name="Reeves J.D."/>
            <person name="Piefer A.J."/>
        </authorList>
    </citation>
    <scope>REVIEW</scope>
</reference>
<reference key="7">
    <citation type="journal article" date="2006" name="EMBO J.">
        <title>HIV and the chemokine system: 10 years later.</title>
        <authorList>
            <person name="Lusso P."/>
        </authorList>
    </citation>
    <scope>REVIEW</scope>
</reference>
<gene>
    <name evidence="1" type="primary">env</name>
</gene>